<comment type="function">
    <text evidence="5 7 8">A putative lipoprotein that seems to be specialized for the initial steps of macrophage infection (PubMed:27220037). A non-acylated fragment (residues 26-185) binds phosphatidyl-myo-inositol mannosides (PIMs) (PubMed:27568926). Limits, in a TLR2-dependent fashion, bacterial uptake by host (mouse); this effect may be mediated by nonacylated fragment 26-185 (PubMed:27220037). Plays a TLR2-dependent role in host phagosome maturation arrest (PubMed:20844580, PubMed:27220037). Plays a TLR2-independent role in chemokine production during the first 24 hours of mouse infection (PubMed:27220037).</text>
</comment>
<comment type="subcellular location">
    <subcellularLocation>
        <location evidence="2">Membrane</location>
        <topology evidence="2">Lipid-anchor</topology>
    </subcellularLocation>
    <subcellularLocation>
        <location evidence="1">Membrane</location>
        <topology evidence="1">Single-pass membrane protein</topology>
    </subcellularLocation>
    <subcellularLocation>
        <location evidence="5">Secreted</location>
        <location evidence="5">Cell wall</location>
    </subcellularLocation>
    <subcellularLocation>
        <location evidence="5">Secreted</location>
    </subcellularLocation>
    <text evidence="5">Mature form (about 28 kDa) is associated with the cell wall and membrane fraction, secreted form is seen after 1 week axenic culture in Sauton's medium without detergent, this form is about 20 kDa (PubMed:27568926). May not be acylated, cell wall association is unchanged by mutation of the putatively acylated residue, and the mutant's migration does not change (PubMed:27568926).</text>
</comment>
<comment type="induction">
    <text evidence="4">Constitutively expressed in culture (at protein level) (PubMed:27220037).</text>
</comment>
<comment type="domain">
    <text evidence="4">An extracytoplasmic domain (residues 26-185, without the lipid-anchor, either periplasmic or extracellular) decreases phagocystosis by macrophages; when added exogenously to the deletion mutant initial bacteria uptake by host (mouse) decreases to wild-type levels. When added exogenously however this region is not sufficient to restore phagosome maturation arrest (PubMed:27220037).</text>
</comment>
<comment type="PTM">
    <text evidence="9">A shorter form (about 20 kDa) is secreted; upon overexpression of the whole protein in M.smegmatis the C-terminus of the short form is about residue 187, suggesting it is generated by cleavage of the protein before its C-terminal transmembrane domain (PubMed:27568926).</text>
</comment>
<comment type="disruption phenotype">
    <text evidence="3 4">Grows normally in liquid culture. Traffics into host (human and mouse) acidified compartments early after phagocytosis, suggesting it no longer arrests phagosome maturation as well as wild-type (PubMed:20844580, PubMed:27220037). Grows normally in mouse macrophages at 7 days post-infection (PubMed:20844580). Initial uptake (2 hours post-infection) by host (mouse) macrophages is higher than wild-type, but decreased growth in host (mouse) macrophages from 1 to 3 days post-infection, wild-type growth at 4 days (PubMed:27220037). Initial uptake of bacteria is the same in TLR2-/TLR2- mice (PubMed:27220037). Decreased host (mouse) induction of pro-inflammatory chemokines gamma IP-10 (Cxcl10), MCP-1 (Ccl2) and MIP-1-alpha (Ccl3); decreased induction is not TLR2-dependent (PubMed:27220037).</text>
</comment>
<accession>O53505</accession>
<accession>F2GK01</accession>
<accession>I6XDJ6</accession>
<accession>L0TAE3</accession>
<sequence length="227" mass="23846">MARTRRRGMLAIAMLLMLVPLATGCLRVRASITISPDDLVSGEIIAAAKPKNSKDTGPALDGDVPFSQKVAVSNYDSDGYVGSQAVFSDLTFAELPQLANMNSDAAGVNLSLRRNGNIVILEGRADLTSVSDPDADVELTVAFPAAVTSTNGDRIEPEVVQWKLKPGVVSTMSAQARYTDPNTRSFTGAGIWLGIAAFAAAGVVAVLAWIDRDRSPRLTASGDPPTS</sequence>
<gene>
    <name type="primary">lppM</name>
    <name type="ordered locus">Rv2171</name>
</gene>
<keyword id="KW-0002">3D-structure</keyword>
<keyword id="KW-0134">Cell wall</keyword>
<keyword id="KW-0446">Lipid-binding</keyword>
<keyword id="KW-0449">Lipoprotein</keyword>
<keyword id="KW-0472">Membrane</keyword>
<keyword id="KW-0564">Palmitate</keyword>
<keyword id="KW-1185">Reference proteome</keyword>
<keyword id="KW-0964">Secreted</keyword>
<keyword id="KW-0732">Signal</keyword>
<keyword id="KW-0812">Transmembrane</keyword>
<keyword id="KW-1133">Transmembrane helix</keyword>
<protein>
    <recommendedName>
        <fullName>Protein LppM</fullName>
    </recommendedName>
    <alternativeName>
        <fullName evidence="6">Putative lipoprotein LppM</fullName>
    </alternativeName>
</protein>
<organism>
    <name type="scientific">Mycobacterium tuberculosis (strain ATCC 25618 / H37Rv)</name>
    <dbReference type="NCBI Taxonomy" id="83332"/>
    <lineage>
        <taxon>Bacteria</taxon>
        <taxon>Bacillati</taxon>
        <taxon>Actinomycetota</taxon>
        <taxon>Actinomycetes</taxon>
        <taxon>Mycobacteriales</taxon>
        <taxon>Mycobacteriaceae</taxon>
        <taxon>Mycobacterium</taxon>
        <taxon>Mycobacterium tuberculosis complex</taxon>
    </lineage>
</organism>
<name>LPPM_MYCTU</name>
<feature type="signal peptide" evidence="2">
    <location>
        <begin position="1"/>
        <end position="24"/>
    </location>
</feature>
<feature type="chain" id="PRO_5004158821" description="Protein LppM" evidence="2">
    <location>
        <begin position="25"/>
        <end position="227"/>
    </location>
</feature>
<feature type="transmembrane region" description="Helical" evidence="1">
    <location>
        <begin position="190"/>
        <end position="210"/>
    </location>
</feature>
<feature type="region of interest" description="Important for bacterial uptake by host macrophages" evidence="4">
    <location>
        <begin position="26"/>
        <end position="185"/>
    </location>
</feature>
<feature type="lipid moiety-binding region" description="N-palmitoyl cysteine" evidence="2">
    <location>
        <position position="25"/>
    </location>
</feature>
<feature type="lipid moiety-binding region" description="S-diacylglycerol cysteine" evidence="2">
    <location>
        <position position="25"/>
    </location>
</feature>
<feature type="mutagenesis site" description="Remains cell wall associated, no difference in gel migration, upon overexpression in M.smegmatis." evidence="5">
    <original>C</original>
    <variation>A</variation>
    <variation>S</variation>
    <location>
        <position position="25"/>
    </location>
</feature>
<feature type="strand" evidence="10">
    <location>
        <begin position="27"/>
        <end position="35"/>
    </location>
</feature>
<feature type="turn" evidence="10">
    <location>
        <begin position="36"/>
        <end position="38"/>
    </location>
</feature>
<feature type="strand" evidence="10">
    <location>
        <begin position="39"/>
        <end position="48"/>
    </location>
</feature>
<feature type="helix" evidence="10">
    <location>
        <begin position="67"/>
        <end position="69"/>
    </location>
</feature>
<feature type="strand" evidence="10">
    <location>
        <begin position="70"/>
        <end position="77"/>
    </location>
</feature>
<feature type="strand" evidence="10">
    <location>
        <begin position="80"/>
        <end position="91"/>
    </location>
</feature>
<feature type="helix" evidence="10">
    <location>
        <begin position="94"/>
        <end position="106"/>
    </location>
</feature>
<feature type="strand" evidence="10">
    <location>
        <begin position="109"/>
        <end position="115"/>
    </location>
</feature>
<feature type="strand" evidence="10">
    <location>
        <begin position="118"/>
        <end position="126"/>
    </location>
</feature>
<feature type="strand" evidence="10">
    <location>
        <begin position="136"/>
        <end position="142"/>
    </location>
</feature>
<feature type="strand" evidence="10">
    <location>
        <begin position="147"/>
        <end position="156"/>
    </location>
</feature>
<feature type="strand" evidence="10">
    <location>
        <begin position="159"/>
        <end position="164"/>
    </location>
</feature>
<feature type="strand" evidence="10">
    <location>
        <begin position="166"/>
        <end position="177"/>
    </location>
</feature>
<evidence type="ECO:0000255" key="1"/>
<evidence type="ECO:0000255" key="2">
    <source>
        <dbReference type="PROSITE-ProRule" id="PRU00303"/>
    </source>
</evidence>
<evidence type="ECO:0000269" key="3">
    <source>
    </source>
</evidence>
<evidence type="ECO:0000269" key="4">
    <source>
    </source>
</evidence>
<evidence type="ECO:0000269" key="5">
    <source>
    </source>
</evidence>
<evidence type="ECO:0000303" key="6">
    <source>
    </source>
</evidence>
<evidence type="ECO:0000305" key="7">
    <source>
    </source>
</evidence>
<evidence type="ECO:0000305" key="8">
    <source>
    </source>
</evidence>
<evidence type="ECO:0000305" key="9">
    <source>
    </source>
</evidence>
<evidence type="ECO:0007829" key="10">
    <source>
        <dbReference type="PDB" id="2NC8"/>
    </source>
</evidence>
<reference key="1">
    <citation type="journal article" date="1998" name="Nature">
        <title>Deciphering the biology of Mycobacterium tuberculosis from the complete genome sequence.</title>
        <authorList>
            <person name="Cole S.T."/>
            <person name="Brosch R."/>
            <person name="Parkhill J."/>
            <person name="Garnier T."/>
            <person name="Churcher C.M."/>
            <person name="Harris D.E."/>
            <person name="Gordon S.V."/>
            <person name="Eiglmeier K."/>
            <person name="Gas S."/>
            <person name="Barry C.E. III"/>
            <person name="Tekaia F."/>
            <person name="Badcock K."/>
            <person name="Basham D."/>
            <person name="Brown D."/>
            <person name="Chillingworth T."/>
            <person name="Connor R."/>
            <person name="Davies R.M."/>
            <person name="Devlin K."/>
            <person name="Feltwell T."/>
            <person name="Gentles S."/>
            <person name="Hamlin N."/>
            <person name="Holroyd S."/>
            <person name="Hornsby T."/>
            <person name="Jagels K."/>
            <person name="Krogh A."/>
            <person name="McLean J."/>
            <person name="Moule S."/>
            <person name="Murphy L.D."/>
            <person name="Oliver S."/>
            <person name="Osborne J."/>
            <person name="Quail M.A."/>
            <person name="Rajandream M.A."/>
            <person name="Rogers J."/>
            <person name="Rutter S."/>
            <person name="Seeger K."/>
            <person name="Skelton S."/>
            <person name="Squares S."/>
            <person name="Squares R."/>
            <person name="Sulston J.E."/>
            <person name="Taylor K."/>
            <person name="Whitehead S."/>
            <person name="Barrell B.G."/>
        </authorList>
    </citation>
    <scope>NUCLEOTIDE SEQUENCE [LARGE SCALE GENOMIC DNA]</scope>
    <source>
        <strain>ATCC 25618 / H37Rv</strain>
    </source>
</reference>
<reference key="2">
    <citation type="journal article" date="2010" name="PLoS Pathog.">
        <title>High content phenotypic cell-based visual screen identifies Mycobacterium tuberculosis acyltrehalose-containing glycolipids involved in phagosome remodeling.</title>
        <authorList>
            <person name="Brodin P."/>
            <person name="Poquet Y."/>
            <person name="Levillain F."/>
            <person name="Peguillet I."/>
            <person name="Larrouy-Maumus G."/>
            <person name="Gilleron M."/>
            <person name="Ewann F."/>
            <person name="Christophe T."/>
            <person name="Fenistein D."/>
            <person name="Jang J."/>
            <person name="Jang M.S."/>
            <person name="Park S.J."/>
            <person name="Rauzier J."/>
            <person name="Carralot J.P."/>
            <person name="Shrimpton R."/>
            <person name="Genovesio A."/>
            <person name="Gonzalo-Asensio J.A."/>
            <person name="Puzo G."/>
            <person name="Martin C."/>
            <person name="Brosch R."/>
            <person name="Stewart G.R."/>
            <person name="Gicquel B."/>
            <person name="Neyrolles O."/>
        </authorList>
    </citation>
    <scope>FUNCTION</scope>
    <scope>DISRUPTION PHENOTYPE</scope>
    <source>
        <strain>Beijing GC1237</strain>
    </source>
</reference>
<reference key="3">
    <citation type="journal article" date="2011" name="Mol. Cell. Proteomics">
        <title>Proteogenomic analysis of Mycobacterium tuberculosis by high resolution mass spectrometry.</title>
        <authorList>
            <person name="Kelkar D.S."/>
            <person name="Kumar D."/>
            <person name="Kumar P."/>
            <person name="Balakrishnan L."/>
            <person name="Muthusamy B."/>
            <person name="Yadav A.K."/>
            <person name="Shrivastava P."/>
            <person name="Marimuthu A."/>
            <person name="Anand S."/>
            <person name="Sundaram H."/>
            <person name="Kingsbury R."/>
            <person name="Harsha H.C."/>
            <person name="Nair B."/>
            <person name="Prasad T.S."/>
            <person name="Chauhan D.S."/>
            <person name="Katoch K."/>
            <person name="Katoch V.M."/>
            <person name="Kumar P."/>
            <person name="Chaerkady R."/>
            <person name="Ramachandran S."/>
            <person name="Dash D."/>
            <person name="Pandey A."/>
        </authorList>
    </citation>
    <scope>IDENTIFICATION BY MASS SPECTROMETRY [LARGE SCALE ANALYSIS]</scope>
    <source>
        <strain>ATCC 25618 / H37Rv</strain>
    </source>
</reference>
<reference key="4">
    <citation type="journal article" date="2016" name="Cell. Microbiol.">
        <title>LppM impact on the colonization of macrophages by Mycobacterium tuberculosis.</title>
        <authorList>
            <person name="Deboosere N."/>
            <person name="Iantomasi R."/>
            <person name="Queval C.J."/>
            <person name="Song O.R."/>
            <person name="Deloison G."/>
            <person name="Jouny S."/>
            <person name="Debrie A.S."/>
            <person name="Chamaillard M."/>
            <person name="Nigou J."/>
            <person name="Cohen-Gonsaud M."/>
            <person name="Locht C."/>
            <person name="Brodin P."/>
            <person name="Veyron-Churlet R."/>
        </authorList>
    </citation>
    <scope>FUNCTION</scope>
    <scope>INDUCTION</scope>
    <scope>DOMAIN</scope>
    <scope>DISRUPTION PHENOTYPE</scope>
    <source>
        <strain>H37Rv</strain>
    </source>
</reference>
<reference key="5">
    <citation type="journal article" date="2016" name="Structure">
        <title>Mycobacterium tuberculosis LppM displays an original structure and domain composition linked to a dual localization.</title>
        <authorList>
            <person name="Barthe P."/>
            <person name="Veyron-Churlet R."/>
            <person name="de Visch A."/>
            <person name="Gilleron M."/>
            <person name="Saliou J.M."/>
            <person name="Tomavo S."/>
            <person name="Nigou J."/>
            <person name="Brodin P."/>
            <person name="Cohen-Gonsaud M."/>
        </authorList>
    </citation>
    <scope>STRUCTURE BY NMR OF 26-185</scope>
    <scope>POSSIBLE FUNCTION</scope>
    <scope>SUBCELLULAR LOCATION</scope>
    <scope>POST-TRANSLATIONAL MODIFICATION</scope>
    <scope>LIPID-BINDING</scope>
    <scope>MUTAGENESIS OF CYS-25</scope>
</reference>
<dbReference type="EMBL" id="AL123456">
    <property type="protein sequence ID" value="CCP44948.1"/>
    <property type="molecule type" value="Genomic_DNA"/>
</dbReference>
<dbReference type="RefSeq" id="NP_216687.1">
    <property type="nucleotide sequence ID" value="NC_000962.3"/>
</dbReference>
<dbReference type="RefSeq" id="WP_003411238.1">
    <property type="nucleotide sequence ID" value="NZ_NVQJ01000083.1"/>
</dbReference>
<dbReference type="PDB" id="2NC8">
    <property type="method" value="NMR"/>
    <property type="chains" value="A=26-185"/>
</dbReference>
<dbReference type="PDBsum" id="2NC8"/>
<dbReference type="SMR" id="O53505"/>
<dbReference type="STRING" id="83332.Rv2171"/>
<dbReference type="PaxDb" id="83332-Rv2171"/>
<dbReference type="GeneID" id="45426147"/>
<dbReference type="GeneID" id="887522"/>
<dbReference type="KEGG" id="mtu:Rv2171"/>
<dbReference type="KEGG" id="mtv:RVBD_2171"/>
<dbReference type="PATRIC" id="fig|83332.111.peg.2417"/>
<dbReference type="TubercuList" id="Rv2171"/>
<dbReference type="eggNOG" id="ENOG50332S7">
    <property type="taxonomic scope" value="Bacteria"/>
</dbReference>
<dbReference type="InParanoid" id="O53505"/>
<dbReference type="OrthoDB" id="3712375at2"/>
<dbReference type="Proteomes" id="UP000001584">
    <property type="component" value="Chromosome"/>
</dbReference>
<dbReference type="GO" id="GO:0005576">
    <property type="term" value="C:extracellular region"/>
    <property type="evidence" value="ECO:0007669"/>
    <property type="project" value="UniProtKB-SubCell"/>
</dbReference>
<dbReference type="GO" id="GO:0016020">
    <property type="term" value="C:membrane"/>
    <property type="evidence" value="ECO:0007669"/>
    <property type="project" value="UniProtKB-SubCell"/>
</dbReference>
<dbReference type="GO" id="GO:0009274">
    <property type="term" value="C:peptidoglycan-based cell wall"/>
    <property type="evidence" value="ECO:0007005"/>
    <property type="project" value="MTBBASE"/>
</dbReference>
<dbReference type="GO" id="GO:0008289">
    <property type="term" value="F:lipid binding"/>
    <property type="evidence" value="ECO:0007669"/>
    <property type="project" value="UniProtKB-KW"/>
</dbReference>
<dbReference type="GO" id="GO:0052170">
    <property type="term" value="P:symbiont-mediated suppression of host innate immune response"/>
    <property type="evidence" value="ECO:0000314"/>
    <property type="project" value="MTBBASE"/>
</dbReference>
<dbReference type="InterPro" id="IPR053807">
    <property type="entry name" value="LppM"/>
</dbReference>
<dbReference type="Pfam" id="PF21946">
    <property type="entry name" value="LppM"/>
    <property type="match status" value="1"/>
</dbReference>
<dbReference type="PROSITE" id="PS51257">
    <property type="entry name" value="PROKAR_LIPOPROTEIN"/>
    <property type="match status" value="1"/>
</dbReference>
<proteinExistence type="evidence at protein level"/>